<name>PPE33_MYCTO</name>
<accession>P9WI02</accession>
<accession>L0TAG3</accession>
<accession>Q79FJ5</accession>
<accession>Q8VJW0</accession>
<reference key="1">
    <citation type="journal article" date="2002" name="J. Bacteriol.">
        <title>Whole-genome comparison of Mycobacterium tuberculosis clinical and laboratory strains.</title>
        <authorList>
            <person name="Fleischmann R.D."/>
            <person name="Alland D."/>
            <person name="Eisen J.A."/>
            <person name="Carpenter L."/>
            <person name="White O."/>
            <person name="Peterson J.D."/>
            <person name="DeBoy R.T."/>
            <person name="Dodson R.J."/>
            <person name="Gwinn M.L."/>
            <person name="Haft D.H."/>
            <person name="Hickey E.K."/>
            <person name="Kolonay J.F."/>
            <person name="Nelson W.C."/>
            <person name="Umayam L.A."/>
            <person name="Ermolaeva M.D."/>
            <person name="Salzberg S.L."/>
            <person name="Delcher A."/>
            <person name="Utterback T.R."/>
            <person name="Weidman J.F."/>
            <person name="Khouri H.M."/>
            <person name="Gill J."/>
            <person name="Mikula A."/>
            <person name="Bishai W."/>
            <person name="Jacobs W.R. Jr."/>
            <person name="Venter J.C."/>
            <person name="Fraser C.M."/>
        </authorList>
    </citation>
    <scope>NUCLEOTIDE SEQUENCE [LARGE SCALE GENOMIC DNA]</scope>
    <source>
        <strain>CDC 1551 / Oshkosh</strain>
    </source>
</reference>
<feature type="chain" id="PRO_0000428092" description="Uncharacterized PPE family protein PPE33">
    <location>
        <begin position="1"/>
        <end position="468"/>
    </location>
</feature>
<feature type="region of interest" description="Disordered" evidence="1">
    <location>
        <begin position="447"/>
        <end position="468"/>
    </location>
</feature>
<evidence type="ECO:0000256" key="1">
    <source>
        <dbReference type="SAM" id="MobiDB-lite"/>
    </source>
</evidence>
<evidence type="ECO:0000305" key="2"/>
<sequence>MDFGLQPPEITSGEMYLGPGAGPMLAAAVAWDGLAAELQSMAASYASIVEGMASESWLGPSSAGMAAAAAPYVTWMSGTSAQAKAAADQARAAVVAYETAFAAVVPPPQIAANRSQLISLVATNIFGQNTAAIAATEAEYGEMWAQDTMAMFGYASSSATASRLTPFTAPPQTTNPSGLAGQAAATGQATALASGTNAVTTALSSAAAQFPFDIIPTLLQGLATLSTQYTQLMGQLINAIFGPTGATTYQNLFVTAANVTKFSTWANDAMSAPNLGMTEFKVFWQPPPAPEIPKSSLGAGLGLRSGLSAGLAHAASAGLGQANLVGDLSVPPSWASATPAVRLVANTLPATSLAAAPATQIPANLLGQMALGSMTGGALGAAAPAIYTGSGARARANGGTPSAEPVKLEAVIAQLQKQPDAVRHWNVDKADLDGLLDRLSKQPGIHAVHVSNGDKPKVALPDTQLGSH</sequence>
<dbReference type="EMBL" id="AE000516">
    <property type="protein sequence ID" value="AAK46130.1"/>
    <property type="status" value="ALT_INIT"/>
    <property type="molecule type" value="Genomic_DNA"/>
</dbReference>
<dbReference type="PIR" id="B70932">
    <property type="entry name" value="B70932"/>
</dbReference>
<dbReference type="RefSeq" id="WP_003899030.1">
    <property type="nucleotide sequence ID" value="NZ_KK341227.1"/>
</dbReference>
<dbReference type="SMR" id="P9WI02"/>
<dbReference type="KEGG" id="mtc:MT1857"/>
<dbReference type="PATRIC" id="fig|83331.31.peg.1999"/>
<dbReference type="HOGENOM" id="CLU_000243_0_1_11"/>
<dbReference type="Proteomes" id="UP000001020">
    <property type="component" value="Chromosome"/>
</dbReference>
<dbReference type="GO" id="GO:0052572">
    <property type="term" value="P:response to host immune response"/>
    <property type="evidence" value="ECO:0007669"/>
    <property type="project" value="TreeGrafter"/>
</dbReference>
<dbReference type="FunFam" id="1.20.1260.20:FF:000001">
    <property type="entry name" value="PPE family protein PPE41"/>
    <property type="match status" value="1"/>
</dbReference>
<dbReference type="Gene3D" id="1.20.1260.20">
    <property type="entry name" value="PPE superfamily"/>
    <property type="match status" value="1"/>
</dbReference>
<dbReference type="InterPro" id="IPR022171">
    <property type="entry name" value="PPE_C"/>
</dbReference>
<dbReference type="InterPro" id="IPR000030">
    <property type="entry name" value="PPE_dom"/>
</dbReference>
<dbReference type="InterPro" id="IPR038332">
    <property type="entry name" value="PPE_sf"/>
</dbReference>
<dbReference type="PANTHER" id="PTHR46766">
    <property type="entry name" value="GLUTAMINE-RICH PROTEIN 2"/>
    <property type="match status" value="1"/>
</dbReference>
<dbReference type="PANTHER" id="PTHR46766:SF1">
    <property type="entry name" value="GLUTAMINE-RICH PROTEIN 2"/>
    <property type="match status" value="1"/>
</dbReference>
<dbReference type="Pfam" id="PF00823">
    <property type="entry name" value="PPE"/>
    <property type="match status" value="1"/>
</dbReference>
<dbReference type="Pfam" id="PF12484">
    <property type="entry name" value="PPE-SVP"/>
    <property type="match status" value="1"/>
</dbReference>
<dbReference type="SUPFAM" id="SSF140459">
    <property type="entry name" value="PE/PPE dimer-like"/>
    <property type="match status" value="1"/>
</dbReference>
<organism>
    <name type="scientific">Mycobacterium tuberculosis (strain CDC 1551 / Oshkosh)</name>
    <dbReference type="NCBI Taxonomy" id="83331"/>
    <lineage>
        <taxon>Bacteria</taxon>
        <taxon>Bacillati</taxon>
        <taxon>Actinomycetota</taxon>
        <taxon>Actinomycetes</taxon>
        <taxon>Mycobacteriales</taxon>
        <taxon>Mycobacteriaceae</taxon>
        <taxon>Mycobacterium</taxon>
        <taxon>Mycobacterium tuberculosis complex</taxon>
    </lineage>
</organism>
<comment type="similarity">
    <text evidence="2">Belongs to the mycobacterial PPE family.</text>
</comment>
<comment type="sequence caution" evidence="2">
    <conflict type="erroneous initiation">
        <sequence resource="EMBL-CDS" id="AAK46130"/>
    </conflict>
</comment>
<proteinExistence type="inferred from homology"/>
<keyword id="KW-1185">Reference proteome</keyword>
<gene>
    <name type="primary">PPE33</name>
    <name type="ordered locus">MT1857</name>
</gene>
<protein>
    <recommendedName>
        <fullName>Uncharacterized PPE family protein PPE33</fullName>
    </recommendedName>
</protein>